<keyword id="KW-0878">Amphibian defense peptide</keyword>
<keyword id="KW-0044">Antibiotic</keyword>
<keyword id="KW-0929">Antimicrobial</keyword>
<keyword id="KW-0165">Cleavage on pair of basic residues</keyword>
<keyword id="KW-0903">Direct protein sequencing</keyword>
<keyword id="KW-1015">Disulfide bond</keyword>
<keyword id="KW-0295">Fungicide</keyword>
<keyword id="KW-0964">Secreted</keyword>
<keyword id="KW-0732">Signal</keyword>
<sequence>MFTLKKSLLLLFFLGTISLSLCEQERSAEDEGEVIEEEVKRGFMDTAKNVAKNVAVTLLDKLKCKITGGC</sequence>
<organism evidence="4">
    <name type="scientific">Odorrana ishikawae</name>
    <name type="common">Ishikawa's frog</name>
    <name type="synonym">Rana ishikawae</name>
    <dbReference type="NCBI Taxonomy" id="310659"/>
    <lineage>
        <taxon>Eukaryota</taxon>
        <taxon>Metazoa</taxon>
        <taxon>Chordata</taxon>
        <taxon>Craniata</taxon>
        <taxon>Vertebrata</taxon>
        <taxon>Euteleostomi</taxon>
        <taxon>Amphibia</taxon>
        <taxon>Batrachia</taxon>
        <taxon>Anura</taxon>
        <taxon>Neobatrachia</taxon>
        <taxon>Ranoidea</taxon>
        <taxon>Ranidae</taxon>
        <taxon>Odorrana</taxon>
    </lineage>
</organism>
<comment type="function">
    <text evidence="3">Has antimicrobial activity against Gram-negative bacterium E.coli ATCC 8739 (MIC=100 ug), against Gram positive bacteria S.aureus ATCC 6538 (MIC=25 ug), methicillin-resistant S.aureus ATCC 43300 (MIC=100 ug), B.subtilis ATCC 6633 (MIC=12.5 ug) and against fungus C.albicans ATCC 90028 (MIC=100 ug).</text>
</comment>
<comment type="subcellular location">
    <subcellularLocation>
        <location evidence="5">Secreted</location>
    </subcellularLocation>
</comment>
<comment type="tissue specificity">
    <text evidence="5">Expressed by the skin glands.</text>
</comment>
<comment type="mass spectrometry"/>
<comment type="similarity">
    <text evidence="2">Belongs to the frog skin active peptide (FSAP) family. Brevinin subfamily.</text>
</comment>
<dbReference type="EMBL" id="AB602054">
    <property type="protein sequence ID" value="BAK08584.1"/>
    <property type="molecule type" value="mRNA"/>
</dbReference>
<dbReference type="SMR" id="F1T152"/>
<dbReference type="GO" id="GO:0005576">
    <property type="term" value="C:extracellular region"/>
    <property type="evidence" value="ECO:0000314"/>
    <property type="project" value="UniProtKB"/>
</dbReference>
<dbReference type="GO" id="GO:0050832">
    <property type="term" value="P:defense response to fungus"/>
    <property type="evidence" value="ECO:0000314"/>
    <property type="project" value="UniProtKB"/>
</dbReference>
<dbReference type="GO" id="GO:0050829">
    <property type="term" value="P:defense response to Gram-negative bacterium"/>
    <property type="evidence" value="ECO:0000314"/>
    <property type="project" value="UniProtKB"/>
</dbReference>
<dbReference type="GO" id="GO:0050830">
    <property type="term" value="P:defense response to Gram-positive bacterium"/>
    <property type="evidence" value="ECO:0000314"/>
    <property type="project" value="UniProtKB"/>
</dbReference>
<dbReference type="GO" id="GO:0031640">
    <property type="term" value="P:killing of cells of another organism"/>
    <property type="evidence" value="ECO:0007669"/>
    <property type="project" value="UniProtKB-KW"/>
</dbReference>
<dbReference type="InterPro" id="IPR012521">
    <property type="entry name" value="Antimicrobial_frog_2"/>
</dbReference>
<dbReference type="InterPro" id="IPR004275">
    <property type="entry name" value="Frog_antimicrobial_propeptide"/>
</dbReference>
<dbReference type="Pfam" id="PF08023">
    <property type="entry name" value="Antimicrobial_2"/>
    <property type="match status" value="1"/>
</dbReference>
<dbReference type="Pfam" id="PF03032">
    <property type="entry name" value="FSAP_sig_propep"/>
    <property type="match status" value="1"/>
</dbReference>
<evidence type="ECO:0000250" key="1">
    <source>
        <dbReference type="UniProtKB" id="A7WNV6"/>
    </source>
</evidence>
<evidence type="ECO:0000255" key="2"/>
<evidence type="ECO:0000269" key="3">
    <source>
    </source>
</evidence>
<evidence type="ECO:0000303" key="4">
    <source>
    </source>
</evidence>
<evidence type="ECO:0000305" key="5">
    <source>
    </source>
</evidence>
<evidence type="ECO:0000312" key="6">
    <source>
        <dbReference type="EMBL" id="BAK08584.1"/>
    </source>
</evidence>
<name>PA2IA_ODOIS</name>
<reference evidence="6" key="1">
    <citation type="journal article" date="2011" name="Peptides">
        <title>Identification and characterization of antimicrobial peptides from the skin of the endangered frog Odorrana ishikawae.</title>
        <authorList>
            <person name="Iwakoshi-Ukena E."/>
            <person name="Ukena K."/>
            <person name="Okimoto A."/>
            <person name="Soga M."/>
            <person name="Okada G."/>
            <person name="Sano N."/>
            <person name="Fujii T."/>
            <person name="Sugawara Y."/>
            <person name="Sumida M."/>
        </authorList>
    </citation>
    <scope>NUCLEOTIDE SEQUENCE [MRNA]</scope>
    <scope>PROTEIN SEQUENCE OF 42-70</scope>
    <scope>FUNCTION</scope>
    <scope>SYNTHESIS</scope>
    <scope>MASS SPECTROMETRY</scope>
    <source>
        <tissue evidence="4">Skin</tissue>
    </source>
</reference>
<proteinExistence type="evidence at protein level"/>
<feature type="signal peptide" evidence="2">
    <location>
        <begin position="1"/>
        <end position="22"/>
    </location>
</feature>
<feature type="propeptide" id="PRO_0000439617" description="Removed in mature form" evidence="5">
    <location>
        <begin position="23"/>
        <end position="39"/>
    </location>
</feature>
<feature type="peptide" id="PRO_0000439618" description="Palustrin-2ISa" evidence="3">
    <location>
        <begin position="42"/>
        <end position="70"/>
    </location>
</feature>
<feature type="disulfide bond" evidence="1">
    <location>
        <begin position="64"/>
        <end position="70"/>
    </location>
</feature>
<accession>F1T152</accession>
<protein>
    <recommendedName>
        <fullName evidence="4">Palustrin-2ISa</fullName>
    </recommendedName>
</protein>